<comment type="function">
    <text evidence="7">Has a dual function in oocytes: as a DNA-binding protein, binds to the Y-box sequence (CTGATTGGCCAA) in the promoters of target genes to stimulate transcription. May also function at CCAAT-containing promoters that lack the consensus Y-box sequence. Also binds mRNA to promote accumulation of the transcripts it contributes to produce.</text>
</comment>
<comment type="subunit">
    <text evidence="2 3 4 6">Possibly forms a heterodimer with p54 in the 6S and 15S mRNA-binding particles. The principle component of multiple messenger ribonucleoprotein (mRNP) complexes. Component of a ribonucleoprotein (RNP) complex, composed at least of elavl1/elrA and/or elavl2/elrB, igf2bp3/vg1RBP, ddx6/Xp54, ybx2/frgy2, lsm14b/rap55b and, in a subset of RNP complexes, stau1/staufen. Component of a ribonucleoprotein (RNP) complex, at least composed of lsm14a/rap55a, ybx2/frgy2, ddx6/Xp54 and eif4enif1/4E-T. Does not appear to directly bind lsm14a/rap55a. Component of a ribonucleoprotein (RNP) complex, at least composed of cpeb1, lsm14b/rap55b, ddx6/Xp54, ybx2/frgy2, pat1/P100, eif4enif1/4E-T and eif4e1b. Interaction with cpeb1 is RNA-dependent.</text>
</comment>
<comment type="subcellular location">
    <subcellularLocation>
        <location evidence="3">Cytoplasm</location>
    </subcellularLocation>
    <text>Either free or associated with ribonucleoprotein particles.</text>
</comment>
<comment type="alternative products">
    <event type="alternative splicing"/>
    <isoform>
        <id>P21574-1</id>
        <name>1</name>
        <sequence type="displayed"/>
    </isoform>
    <isoform>
        <id>P21574-2</id>
        <name>2</name>
        <sequence type="described" ref="VSP_038730"/>
    </isoform>
</comment>
<comment type="tissue specificity">
    <text evidence="7">In adults, expression is restricted to the ovary and testis.</text>
</comment>
<comment type="developmental stage">
    <text evidence="3 4 7">Expressed maternally.</text>
</comment>
<comment type="PTM">
    <text evidence="5">Phosphorylation activates in vitro RNA binding.</text>
</comment>
<comment type="caution">
    <text evidence="9">PubMed:2247479 report a decline in expression during oogenesis, but PubMed:1729676 show expression is maintained at a high level throughout oogenesis.</text>
</comment>
<gene>
    <name type="primary">ybx2-a</name>
    <name type="synonym">frgy2</name>
    <name type="synonym">frgy2-a</name>
</gene>
<keyword id="KW-0025">Alternative splicing</keyword>
<keyword id="KW-0963">Cytoplasm</keyword>
<keyword id="KW-0903">Direct protein sequencing</keyword>
<keyword id="KW-0238">DNA-binding</keyword>
<keyword id="KW-0597">Phosphoprotein</keyword>
<keyword id="KW-1185">Reference proteome</keyword>
<keyword id="KW-0687">Ribonucleoprotein</keyword>
<keyword id="KW-0694">RNA-binding</keyword>
<keyword id="KW-0804">Transcription</keyword>
<keyword id="KW-0805">Transcription regulation</keyword>
<reference key="1">
    <citation type="journal article" date="1990" name="Proc. Natl. Acad. Sci. U.S.A.">
        <title>Xenopus Y-box transcription factors: molecular cloning, functional analysis and developmental regulation.</title>
        <authorList>
            <person name="Tafuri S.R."/>
            <person name="Wolffe A.P."/>
        </authorList>
    </citation>
    <scope>NUCLEOTIDE SEQUENCE [MRNA] (ISOFORM 1)</scope>
    <scope>FUNCTION</scope>
    <scope>TISSUE SPECIFICITY</scope>
    <scope>DEVELOPMENTAL STAGE</scope>
</reference>
<reference key="2">
    <citation type="submission" date="2008-11" db="EMBL/GenBank/DDBJ databases">
        <authorList>
            <consortium name="NIH - Xenopus Gene Collection (XGC) project"/>
        </authorList>
    </citation>
    <scope>NUCLEOTIDE SEQUENCE [LARGE SCALE MRNA] (ISOFORMS 1 AND 2)</scope>
    <source>
        <tissue>Gastrula</tissue>
        <tissue>Testis</tissue>
    </source>
</reference>
<reference key="3">
    <citation type="journal article" date="1991" name="FEBS Lett.">
        <title>Purification of two thermostable components of messenger ribonucleoprotein particles (mRNPs) from Xenopus laevis oocytes, belonging to a novel class of RNA-binding proteins.</title>
        <authorList>
            <person name="Deschamps S."/>
            <person name="Viel A."/>
            <person name="Denis H."/>
            <person name="le Maire M."/>
        </authorList>
    </citation>
    <scope>PROTEIN SEQUENCE OF 5-39; 93-122 AND 213-225</scope>
    <scope>PHOSPHORYLATION</scope>
    <source>
        <tissue>Oocyte</tissue>
    </source>
</reference>
<reference key="4">
    <citation type="journal article" date="1992" name="Proc. Natl. Acad. Sci. U.S.A.">
        <title>Sequence analysis of cytoplasmic mRNA-binding proteins of Xenopus oocytes identifies a family of RNA-binding proteins.</title>
        <authorList>
            <person name="Murray M.T."/>
            <person name="Schiller D.L."/>
            <person name="Franke W.W."/>
        </authorList>
    </citation>
    <scope>NUCLEOTIDE SEQUENCE [MRNA] OF 118-336 (ISOFORM 1)</scope>
    <scope>PROTEIN SEQUENCE OF 56-82; 95-113 AND 234-255</scope>
    <scope>SUBUNIT</scope>
    <scope>SUBCELLULAR LOCATION</scope>
    <scope>DEVELOPMENTAL STAGE</scope>
    <source>
        <tissue>Ovary</tissue>
    </source>
</reference>
<reference key="5">
    <citation type="journal article" date="1992" name="J. Biol. Chem.">
        <title>mRNP4, a major mRNA-binding protein from Xenopus oocytes is identical to transcription factor FRG Y2.</title>
        <authorList>
            <person name="Deschamps S."/>
            <person name="Viel A."/>
            <person name="Garrigos M."/>
            <person name="Denis H."/>
            <person name="le Maire M."/>
        </authorList>
    </citation>
    <scope>IDENTIFICATION</scope>
</reference>
<reference key="6">
    <citation type="journal article" date="2006" name="J. Biol. Chem.">
        <title>RAP55, a cytoplasmic mRNP component, represses translation in Xenopus oocytes.</title>
        <authorList>
            <person name="Tanaka K.J."/>
            <person name="Ogawa K."/>
            <person name="Takagi M."/>
            <person name="Imamoto N."/>
            <person name="Matsumoto K."/>
            <person name="Tsujimoto M."/>
        </authorList>
    </citation>
    <scope>IDENTIFICATION IN A RIBONUCLEOPROTEIN COMPLEX WITH LSM14A; DDX6 AND EIF4ENIF1</scope>
</reference>
<reference key="7">
    <citation type="journal article" date="2007" name="J. Biol. Chem.">
        <title>CPEB interacts with an ovary-specific eIF4E and 4E-T in early Xenopus oocytes.</title>
        <authorList>
            <person name="Minshall N."/>
            <person name="Reiter M.H."/>
            <person name="Weil D."/>
            <person name="Standart N."/>
        </authorList>
    </citation>
    <scope>IDENTIFICATION IN A RIBONUCLEOPROTEIN COMPLEX WITH CPEB1; DDX6; PAT1; EIF4ENIF1; EIF4E1B AND RAP55B</scope>
    <scope>DEVELOPMENTAL STAGE</scope>
</reference>
<reference key="8">
    <citation type="journal article" date="2009" name="J. Biol. Chem.">
        <title>Participation of Xenopus Elr-type proteins in vegetal mRNA localization during oogenesis.</title>
        <authorList>
            <person name="Arthur P.K."/>
            <person name="Claussen M."/>
            <person name="Koch S."/>
            <person name="Tarbashevich K."/>
            <person name="Jahn O."/>
            <person name="Pieler T."/>
        </authorList>
    </citation>
    <scope>IDENTIFICATION IN A RIBONUCLEOPROTEIN COMPLEX WITH ELAVL1; ELAVL2; IGF2BP3; STAU1; DDX6 AND LSM14B</scope>
</reference>
<organism>
    <name type="scientific">Xenopus laevis</name>
    <name type="common">African clawed frog</name>
    <dbReference type="NCBI Taxonomy" id="8355"/>
    <lineage>
        <taxon>Eukaryota</taxon>
        <taxon>Metazoa</taxon>
        <taxon>Chordata</taxon>
        <taxon>Craniata</taxon>
        <taxon>Vertebrata</taxon>
        <taxon>Euteleostomi</taxon>
        <taxon>Amphibia</taxon>
        <taxon>Batrachia</taxon>
        <taxon>Anura</taxon>
        <taxon>Pipoidea</taxon>
        <taxon>Pipidae</taxon>
        <taxon>Xenopodinae</taxon>
        <taxon>Xenopus</taxon>
        <taxon>Xenopus</taxon>
    </lineage>
</organism>
<accession>P21574</accession>
<accession>A9JS46</accession>
<accession>B7ZQ73</accession>
<sequence length="336" mass="37233">MSEAEAQEPEPVPQPESEPEIQKPGIAAARNQANKKVLATQVQGTVKWFNVRNGYGFINRNDTKEDVFVHQTAIKKNNPRKFLRSVGDGETVEFDVVEGEKGAEAANVTGPGGVPVKGSRFAPNRRRFRRRFYRPRADTAGESGGEGVSPEQMSEGERGEETSPQQRPQRRRPPPFFYRRRFRRGPRPNNQQNQGAEVTEQSENKDPVAPTSEALASGDDPQRPPPRRFRQRFRRPFRPRPAPQQTPEGGDGETKAESGEDPRPEPQRQRNRPYVQRRRRQGATQVAATAQGEGKAEPTQHPASEEGTPSDSPTDDGAPVQSSAPDPGIADTPAPE</sequence>
<name>YBX2A_XENLA</name>
<evidence type="ECO:0000256" key="1">
    <source>
        <dbReference type="SAM" id="MobiDB-lite"/>
    </source>
</evidence>
<evidence type="ECO:0000269" key="2">
    <source>
    </source>
</evidence>
<evidence type="ECO:0000269" key="3">
    <source>
    </source>
</evidence>
<evidence type="ECO:0000269" key="4">
    <source>
    </source>
</evidence>
<evidence type="ECO:0000269" key="5">
    <source>
    </source>
</evidence>
<evidence type="ECO:0000269" key="6">
    <source>
    </source>
</evidence>
<evidence type="ECO:0000269" key="7">
    <source>
    </source>
</evidence>
<evidence type="ECO:0000303" key="8">
    <source ref="2"/>
</evidence>
<evidence type="ECO:0000305" key="9"/>
<feature type="chain" id="PRO_0000100227" description="Y-box-binding protein 2-A">
    <location>
        <begin position="1"/>
        <end position="336"/>
    </location>
</feature>
<feature type="domain" description="CSD">
    <location>
        <begin position="44"/>
        <end position="108"/>
    </location>
</feature>
<feature type="region of interest" description="Disordered" evidence="1">
    <location>
        <begin position="1"/>
        <end position="22"/>
    </location>
</feature>
<feature type="region of interest" description="Disordered" evidence="1">
    <location>
        <begin position="103"/>
        <end position="336"/>
    </location>
</feature>
<feature type="compositionally biased region" description="Basic residues" evidence="1">
    <location>
        <begin position="123"/>
        <end position="134"/>
    </location>
</feature>
<feature type="compositionally biased region" description="Basic residues" evidence="1">
    <location>
        <begin position="168"/>
        <end position="186"/>
    </location>
</feature>
<feature type="compositionally biased region" description="Basic residues" evidence="1">
    <location>
        <begin position="225"/>
        <end position="238"/>
    </location>
</feature>
<feature type="compositionally biased region" description="Basic and acidic residues" evidence="1">
    <location>
        <begin position="252"/>
        <end position="268"/>
    </location>
</feature>
<feature type="compositionally biased region" description="Basic residues" evidence="1">
    <location>
        <begin position="269"/>
        <end position="281"/>
    </location>
</feature>
<feature type="compositionally biased region" description="Low complexity" evidence="1">
    <location>
        <begin position="282"/>
        <end position="292"/>
    </location>
</feature>
<feature type="splice variant" id="VSP_038730" description="In isoform 2." evidence="8">
    <original>SSAPDPGIADTPAPE</original>
    <variation>VPALFHLPAALDSMGIFGTLQ</variation>
    <location>
        <begin position="322"/>
        <end position="336"/>
    </location>
</feature>
<feature type="sequence conflict" description="In Ref. 4; AA sequence." evidence="9" ref="4">
    <original>T</original>
    <variation>A</variation>
    <location>
        <position position="254"/>
    </location>
</feature>
<dbReference type="EMBL" id="M59454">
    <property type="protein sequence ID" value="AAA49716.1"/>
    <property type="molecule type" value="mRNA"/>
</dbReference>
<dbReference type="EMBL" id="BC155914">
    <property type="protein sequence ID" value="AAI55915.1"/>
    <property type="molecule type" value="mRNA"/>
</dbReference>
<dbReference type="EMBL" id="BC169704">
    <property type="protein sequence ID" value="AAI69704.1"/>
    <property type="molecule type" value="mRNA"/>
</dbReference>
<dbReference type="EMBL" id="BC169706">
    <property type="protein sequence ID" value="AAI69706.1"/>
    <property type="molecule type" value="mRNA"/>
</dbReference>
<dbReference type="PIR" id="B38274">
    <property type="entry name" value="B38274"/>
</dbReference>
<dbReference type="RefSeq" id="NP_001081274.1">
    <molecule id="P21574-1"/>
    <property type="nucleotide sequence ID" value="NM_001087805.1"/>
</dbReference>
<dbReference type="SMR" id="P21574"/>
<dbReference type="BioGRID" id="99085">
    <property type="interactions" value="3"/>
</dbReference>
<dbReference type="GeneID" id="397746"/>
<dbReference type="KEGG" id="xla:397746"/>
<dbReference type="AGR" id="Xenbase:XB-GENE-6252609"/>
<dbReference type="CTD" id="397746"/>
<dbReference type="Xenbase" id="XB-GENE-6252609">
    <property type="gene designation" value="ybx2.L"/>
</dbReference>
<dbReference type="OMA" id="GQTQSDQ"/>
<dbReference type="OrthoDB" id="203339at2759"/>
<dbReference type="Proteomes" id="UP000186698">
    <property type="component" value="Chromosome 3L"/>
</dbReference>
<dbReference type="Bgee" id="397746">
    <property type="expression patterns" value="Expressed in testis and 19 other cell types or tissues"/>
</dbReference>
<dbReference type="GO" id="GO:0005737">
    <property type="term" value="C:cytoplasm"/>
    <property type="evidence" value="ECO:0007669"/>
    <property type="project" value="UniProtKB-SubCell"/>
</dbReference>
<dbReference type="GO" id="GO:0005634">
    <property type="term" value="C:nucleus"/>
    <property type="evidence" value="ECO:0000318"/>
    <property type="project" value="GO_Central"/>
</dbReference>
<dbReference type="GO" id="GO:1990904">
    <property type="term" value="C:ribonucleoprotein complex"/>
    <property type="evidence" value="ECO:0000353"/>
    <property type="project" value="UniProtKB"/>
</dbReference>
<dbReference type="GO" id="GO:0003676">
    <property type="term" value="F:nucleic acid binding"/>
    <property type="evidence" value="ECO:0000318"/>
    <property type="project" value="GO_Central"/>
</dbReference>
<dbReference type="GO" id="GO:0003723">
    <property type="term" value="F:RNA binding"/>
    <property type="evidence" value="ECO:0000314"/>
    <property type="project" value="UniProtKB"/>
</dbReference>
<dbReference type="GO" id="GO:0043565">
    <property type="term" value="F:sequence-specific DNA binding"/>
    <property type="evidence" value="ECO:0000314"/>
    <property type="project" value="UniProtKB"/>
</dbReference>
<dbReference type="GO" id="GO:0045893">
    <property type="term" value="P:positive regulation of DNA-templated transcription"/>
    <property type="evidence" value="ECO:0000314"/>
    <property type="project" value="UniProtKB"/>
</dbReference>
<dbReference type="GO" id="GO:0010468">
    <property type="term" value="P:regulation of gene expression"/>
    <property type="evidence" value="ECO:0000318"/>
    <property type="project" value="GO_Central"/>
</dbReference>
<dbReference type="CDD" id="cd04458">
    <property type="entry name" value="CSP_CDS"/>
    <property type="match status" value="1"/>
</dbReference>
<dbReference type="FunFam" id="2.40.50.140:FF:000054">
    <property type="entry name" value="Nuclease-sensitive element-binding protein 1"/>
    <property type="match status" value="1"/>
</dbReference>
<dbReference type="Gene3D" id="2.40.50.140">
    <property type="entry name" value="Nucleic acid-binding proteins"/>
    <property type="match status" value="1"/>
</dbReference>
<dbReference type="InterPro" id="IPR050181">
    <property type="entry name" value="Cold_shock_domain"/>
</dbReference>
<dbReference type="InterPro" id="IPR011129">
    <property type="entry name" value="CSD"/>
</dbReference>
<dbReference type="InterPro" id="IPR019844">
    <property type="entry name" value="CSD_CS"/>
</dbReference>
<dbReference type="InterPro" id="IPR002059">
    <property type="entry name" value="CSP_DNA-bd"/>
</dbReference>
<dbReference type="InterPro" id="IPR012340">
    <property type="entry name" value="NA-bd_OB-fold"/>
</dbReference>
<dbReference type="PANTHER" id="PTHR11544">
    <property type="entry name" value="COLD SHOCK DOMAIN CONTAINING PROTEINS"/>
    <property type="match status" value="1"/>
</dbReference>
<dbReference type="Pfam" id="PF00313">
    <property type="entry name" value="CSD"/>
    <property type="match status" value="1"/>
</dbReference>
<dbReference type="PRINTS" id="PR00050">
    <property type="entry name" value="COLDSHOCK"/>
</dbReference>
<dbReference type="SMART" id="SM00357">
    <property type="entry name" value="CSP"/>
    <property type="match status" value="1"/>
</dbReference>
<dbReference type="SUPFAM" id="SSF50249">
    <property type="entry name" value="Nucleic acid-binding proteins"/>
    <property type="match status" value="1"/>
</dbReference>
<dbReference type="PROSITE" id="PS00352">
    <property type="entry name" value="CSD_1"/>
    <property type="match status" value="1"/>
</dbReference>
<dbReference type="PROSITE" id="PS51857">
    <property type="entry name" value="CSD_2"/>
    <property type="match status" value="1"/>
</dbReference>
<proteinExistence type="evidence at protein level"/>
<protein>
    <recommendedName>
        <fullName>Y-box-binding protein 2-A</fullName>
    </recommendedName>
    <alternativeName>
        <fullName>Cytoplasmic RNA-binding protein p56</fullName>
    </alternativeName>
    <alternativeName>
        <fullName>Frog Y-box protein 2</fullName>
        <shortName>FRG Y2</shortName>
    </alternativeName>
    <alternativeName>
        <fullName>Frog Y-box protein 2-A</fullName>
        <shortName>FRGY2a</shortName>
    </alternativeName>
    <alternativeName>
        <fullName>Messenger ribonucleoprotein particle 4</fullName>
        <shortName>mRNP4</shortName>
    </alternativeName>
</protein>